<proteinExistence type="inferred from homology"/>
<organism>
    <name type="scientific">Shigella sonnei (strain Ss046)</name>
    <dbReference type="NCBI Taxonomy" id="300269"/>
    <lineage>
        <taxon>Bacteria</taxon>
        <taxon>Pseudomonadati</taxon>
        <taxon>Pseudomonadota</taxon>
        <taxon>Gammaproteobacteria</taxon>
        <taxon>Enterobacterales</taxon>
        <taxon>Enterobacteriaceae</taxon>
        <taxon>Shigella</taxon>
    </lineage>
</organism>
<feature type="chain" id="PRO_1000062734" description="UDP-N-acetyl-D-mannosaminuronic acid transferase">
    <location>
        <begin position="1"/>
        <end position="246"/>
    </location>
</feature>
<evidence type="ECO:0000255" key="1">
    <source>
        <dbReference type="HAMAP-Rule" id="MF_01001"/>
    </source>
</evidence>
<dbReference type="EC" id="2.4.1.180" evidence="1"/>
<dbReference type="EMBL" id="CP000038">
    <property type="protein sequence ID" value="AAZ90494.1"/>
    <property type="molecule type" value="Genomic_DNA"/>
</dbReference>
<dbReference type="RefSeq" id="WP_001064038.1">
    <property type="nucleotide sequence ID" value="NC_007384.1"/>
</dbReference>
<dbReference type="SMR" id="Q3YVG8"/>
<dbReference type="CAZy" id="GT26">
    <property type="family name" value="Glycosyltransferase Family 26"/>
</dbReference>
<dbReference type="GeneID" id="93778149"/>
<dbReference type="KEGG" id="ssn:SSON_3967"/>
<dbReference type="HOGENOM" id="CLU_063203_3_2_6"/>
<dbReference type="UniPathway" id="UPA00566"/>
<dbReference type="Proteomes" id="UP000002529">
    <property type="component" value="Chromosome"/>
</dbReference>
<dbReference type="GO" id="GO:0047241">
    <property type="term" value="F:lipopolysaccharide N-acetylmannosaminouronosyltransferase activity"/>
    <property type="evidence" value="ECO:0007669"/>
    <property type="project" value="UniProtKB-UniRule"/>
</dbReference>
<dbReference type="GO" id="GO:0009246">
    <property type="term" value="P:enterobacterial common antigen biosynthetic process"/>
    <property type="evidence" value="ECO:0007669"/>
    <property type="project" value="UniProtKB-UniRule"/>
</dbReference>
<dbReference type="CDD" id="cd06533">
    <property type="entry name" value="Glyco_transf_WecG_TagA"/>
    <property type="match status" value="1"/>
</dbReference>
<dbReference type="HAMAP" id="MF_01001">
    <property type="entry name" value="WecG_RffM"/>
    <property type="match status" value="1"/>
</dbReference>
<dbReference type="InterPro" id="IPR023085">
    <property type="entry name" value="UDP-ManNAcA_Trfase_WecG"/>
</dbReference>
<dbReference type="InterPro" id="IPR004629">
    <property type="entry name" value="WecG_TagA_CpsF"/>
</dbReference>
<dbReference type="NCBIfam" id="NF002980">
    <property type="entry name" value="PRK03692.1"/>
    <property type="match status" value="1"/>
</dbReference>
<dbReference type="NCBIfam" id="TIGR00696">
    <property type="entry name" value="wecG_tagA_cpsF"/>
    <property type="match status" value="1"/>
</dbReference>
<dbReference type="PANTHER" id="PTHR34136">
    <property type="match status" value="1"/>
</dbReference>
<dbReference type="PANTHER" id="PTHR34136:SF1">
    <property type="entry name" value="UDP-N-ACETYL-D-MANNOSAMINURONIC ACID TRANSFERASE"/>
    <property type="match status" value="1"/>
</dbReference>
<dbReference type="Pfam" id="PF03808">
    <property type="entry name" value="Glyco_tran_WecG"/>
    <property type="match status" value="1"/>
</dbReference>
<gene>
    <name evidence="1" type="primary">wecG</name>
    <name evidence="1" type="synonym">rffM</name>
    <name type="ordered locus">SSON_3967</name>
</gene>
<reference key="1">
    <citation type="journal article" date="2005" name="Nucleic Acids Res.">
        <title>Genome dynamics and diversity of Shigella species, the etiologic agents of bacillary dysentery.</title>
        <authorList>
            <person name="Yang F."/>
            <person name="Yang J."/>
            <person name="Zhang X."/>
            <person name="Chen L."/>
            <person name="Jiang Y."/>
            <person name="Yan Y."/>
            <person name="Tang X."/>
            <person name="Wang J."/>
            <person name="Xiong Z."/>
            <person name="Dong J."/>
            <person name="Xue Y."/>
            <person name="Zhu Y."/>
            <person name="Xu X."/>
            <person name="Sun L."/>
            <person name="Chen S."/>
            <person name="Nie H."/>
            <person name="Peng J."/>
            <person name="Xu J."/>
            <person name="Wang Y."/>
            <person name="Yuan Z."/>
            <person name="Wen Y."/>
            <person name="Yao Z."/>
            <person name="Shen Y."/>
            <person name="Qiang B."/>
            <person name="Hou Y."/>
            <person name="Yu J."/>
            <person name="Jin Q."/>
        </authorList>
    </citation>
    <scope>NUCLEOTIDE SEQUENCE [LARGE SCALE GENOMIC DNA]</scope>
    <source>
        <strain>Ss046</strain>
    </source>
</reference>
<name>WECG_SHISS</name>
<keyword id="KW-0328">Glycosyltransferase</keyword>
<keyword id="KW-1185">Reference proteome</keyword>
<keyword id="KW-0808">Transferase</keyword>
<protein>
    <recommendedName>
        <fullName evidence="1">UDP-N-acetyl-D-mannosaminuronic acid transferase</fullName>
        <shortName evidence="1">UDP-ManNAcA transferase</shortName>
        <ecNumber evidence="1">2.4.1.180</ecNumber>
    </recommendedName>
</protein>
<comment type="function">
    <text evidence="1">Catalyzes the synthesis of Und-PP-GlcNAc-ManNAcA (Lipid II), the second lipid-linked intermediate involved in enterobacterial common antigen (ECA) synthesis.</text>
</comment>
<comment type="catalytic activity">
    <reaction evidence="1">
        <text>UDP-N-acetyl-alpha-D-mannosaminouronate + N-acetyl-alpha-D-glucosaminyl-di-trans,octa-cis-undecaprenyl diphosphate = beta-D-ManNAcA-(1-&gt;4)-alpha-D-GlcNAc-di-trans,octa-cis-undecaprenyl diphosphate + UDP + H(+)</text>
        <dbReference type="Rhea" id="RHEA:28366"/>
        <dbReference type="ChEBI" id="CHEBI:15378"/>
        <dbReference type="ChEBI" id="CHEBI:58223"/>
        <dbReference type="ChEBI" id="CHEBI:61495"/>
        <dbReference type="ChEBI" id="CHEBI:62959"/>
        <dbReference type="ChEBI" id="CHEBI:70731"/>
        <dbReference type="EC" id="2.4.1.180"/>
    </reaction>
</comment>
<comment type="pathway">
    <text evidence="1">Bacterial outer membrane biogenesis; enterobacterial common antigen biosynthesis.</text>
</comment>
<comment type="similarity">
    <text evidence="1">Belongs to the glycosyltransferase 26 family.</text>
</comment>
<accession>Q3YVG8</accession>
<sequence>MNNNTTAPTYTLRGLQLIGWRDMQHALDYLFADGQLKQGTLVAINAEKMLTIEDNAEVRELINAAEFKYADGISVVRSVRKKYPQAQVSRVAGADLWEELMARAGKEGTPVFLVGGKPEVLAQTEAKLRNQWNVNIVGSQDGYFKPEQRQALFERIHASGAQIVTVAMGSPKQEIFMRDCRLVHPDALYMGVGGTYDVFTGHVKRAPKIWQTLGLEWLYRLLSQPSRIKRQLRLLRYLRWHYTGNL</sequence>